<proteinExistence type="inferred from homology"/>
<reference key="1">
    <citation type="journal article" date="2007" name="J. Bacteriol.">
        <title>The genome sequence of avian pathogenic Escherichia coli strain O1:K1:H7 shares strong similarities with human extraintestinal pathogenic E. coli genomes.</title>
        <authorList>
            <person name="Johnson T.J."/>
            <person name="Kariyawasam S."/>
            <person name="Wannemuehler Y."/>
            <person name="Mangiamele P."/>
            <person name="Johnson S.J."/>
            <person name="Doetkott C."/>
            <person name="Skyberg J.A."/>
            <person name="Lynne A.M."/>
            <person name="Johnson J.R."/>
            <person name="Nolan L.K."/>
        </authorList>
    </citation>
    <scope>NUCLEOTIDE SEQUENCE [LARGE SCALE GENOMIC DNA]</scope>
</reference>
<organism>
    <name type="scientific">Escherichia coli O1:K1 / APEC</name>
    <dbReference type="NCBI Taxonomy" id="405955"/>
    <lineage>
        <taxon>Bacteria</taxon>
        <taxon>Pseudomonadati</taxon>
        <taxon>Pseudomonadota</taxon>
        <taxon>Gammaproteobacteria</taxon>
        <taxon>Enterobacterales</taxon>
        <taxon>Enterobacteriaceae</taxon>
        <taxon>Escherichia</taxon>
    </lineage>
</organism>
<keyword id="KW-0997">Cell inner membrane</keyword>
<keyword id="KW-1003">Cell membrane</keyword>
<keyword id="KW-0472">Membrane</keyword>
<keyword id="KW-1185">Reference proteome</keyword>
<keyword id="KW-0812">Transmembrane</keyword>
<keyword id="KW-1133">Transmembrane helix</keyword>
<keyword id="KW-0813">Transport</keyword>
<sequence>MTDLPDSTRWQLWIVAFGFFMQSLDTTIVNTALPSMAQSLGESPLHMHMVIVSYVLTVAVMLPASGWLADKVGVRNIFFTAIVLFTLGSLFCALSGTLNELLLARALQGVGGAMMVPVGRLTVMKIVPREQYMAAMTFVTLPGQVGPLLGPALGGLLVEYASWHWIFLINIPVGIIGAIATLMLMPNYTMQTRRFDLSGFLLLAVGMAVLTLALDGSKGTGFSPLAIAGLVAVGVVALVLYLLHAQNNNRALFSLKLFRTRNFSLGLAGSFAGRIGSGMLPFMTPVFLQIGLGFSPFHAGLMMIPMVLGSMGMKRIVVQVVNRFGYRRVLVATTLGLSLVTLLFMTTALLGWYYVLPFVLFLQGMVNSTRFSSMNTLTLKDLPDNLASSGNSLLSMIMQLSMSIGVTIAGLLLGLFGSQHVSVDSGTTQTVFMYTWLSMAFIIALPAFVFARVPSDTHQNVAISRRKRSAQ</sequence>
<dbReference type="EMBL" id="CP000468">
    <property type="protein sequence ID" value="ABJ01472.1"/>
    <property type="molecule type" value="Genomic_DNA"/>
</dbReference>
<dbReference type="RefSeq" id="WP_000130863.1">
    <property type="nucleotide sequence ID" value="NC_008563.1"/>
</dbReference>
<dbReference type="SMR" id="A1ACT2"/>
<dbReference type="KEGG" id="ecv:APECO1_1167"/>
<dbReference type="HOGENOM" id="CLU_000960_28_0_6"/>
<dbReference type="Proteomes" id="UP000008216">
    <property type="component" value="Chromosome"/>
</dbReference>
<dbReference type="GO" id="GO:0005886">
    <property type="term" value="C:plasma membrane"/>
    <property type="evidence" value="ECO:0007669"/>
    <property type="project" value="UniProtKB-SubCell"/>
</dbReference>
<dbReference type="GO" id="GO:0022857">
    <property type="term" value="F:transmembrane transporter activity"/>
    <property type="evidence" value="ECO:0007669"/>
    <property type="project" value="UniProtKB-UniRule"/>
</dbReference>
<dbReference type="CDD" id="cd17503">
    <property type="entry name" value="MFS_LmrB_MDR_like"/>
    <property type="match status" value="1"/>
</dbReference>
<dbReference type="FunFam" id="1.20.1250.20:FF:000021">
    <property type="entry name" value="Putative multidrug resistance protein MdtD"/>
    <property type="match status" value="1"/>
</dbReference>
<dbReference type="FunFam" id="1.20.1720.10:FF:000001">
    <property type="entry name" value="Putative multidrug resistance protein MdtD"/>
    <property type="match status" value="1"/>
</dbReference>
<dbReference type="Gene3D" id="1.20.1250.20">
    <property type="entry name" value="MFS general substrate transporter like domains"/>
    <property type="match status" value="1"/>
</dbReference>
<dbReference type="Gene3D" id="1.20.1720.10">
    <property type="entry name" value="Multidrug resistance protein D"/>
    <property type="match status" value="1"/>
</dbReference>
<dbReference type="HAMAP" id="MF_01577">
    <property type="entry name" value="MFS_MdtD"/>
    <property type="match status" value="1"/>
</dbReference>
<dbReference type="InterPro" id="IPR004638">
    <property type="entry name" value="EmrB-like"/>
</dbReference>
<dbReference type="InterPro" id="IPR011701">
    <property type="entry name" value="MFS"/>
</dbReference>
<dbReference type="InterPro" id="IPR020846">
    <property type="entry name" value="MFS_dom"/>
</dbReference>
<dbReference type="InterPro" id="IPR036259">
    <property type="entry name" value="MFS_trans_sf"/>
</dbReference>
<dbReference type="InterPro" id="IPR023721">
    <property type="entry name" value="Multi-R_MdtD"/>
</dbReference>
<dbReference type="NCBIfam" id="TIGR00711">
    <property type="entry name" value="efflux_EmrB"/>
    <property type="match status" value="1"/>
</dbReference>
<dbReference type="NCBIfam" id="NF007799">
    <property type="entry name" value="PRK10504.1"/>
    <property type="match status" value="1"/>
</dbReference>
<dbReference type="PANTHER" id="PTHR42718:SF46">
    <property type="entry name" value="BLR6921 PROTEIN"/>
    <property type="match status" value="1"/>
</dbReference>
<dbReference type="PANTHER" id="PTHR42718">
    <property type="entry name" value="MAJOR FACILITATOR SUPERFAMILY MULTIDRUG TRANSPORTER MFSC"/>
    <property type="match status" value="1"/>
</dbReference>
<dbReference type="Pfam" id="PF07690">
    <property type="entry name" value="MFS_1"/>
    <property type="match status" value="1"/>
</dbReference>
<dbReference type="PRINTS" id="PR01036">
    <property type="entry name" value="TCRTETB"/>
</dbReference>
<dbReference type="SUPFAM" id="SSF103473">
    <property type="entry name" value="MFS general substrate transporter"/>
    <property type="match status" value="1"/>
</dbReference>
<dbReference type="PROSITE" id="PS50850">
    <property type="entry name" value="MFS"/>
    <property type="match status" value="1"/>
</dbReference>
<name>MDTD_ECOK1</name>
<evidence type="ECO:0000255" key="1">
    <source>
        <dbReference type="HAMAP-Rule" id="MF_01577"/>
    </source>
</evidence>
<protein>
    <recommendedName>
        <fullName evidence="1">Putative multidrug resistance protein MdtD</fullName>
    </recommendedName>
</protein>
<gene>
    <name evidence="1" type="primary">mdtD</name>
    <name type="ordered locus">Ecok1_19780</name>
    <name type="ORF">APECO1_1167</name>
</gene>
<accession>A1ACT2</accession>
<comment type="subcellular location">
    <subcellularLocation>
        <location evidence="1">Cell inner membrane</location>
        <topology evidence="1">Multi-pass membrane protein</topology>
    </subcellularLocation>
</comment>
<comment type="similarity">
    <text evidence="1">Belongs to the major facilitator superfamily. TCR/Tet family.</text>
</comment>
<feature type="chain" id="PRO_0000280491" description="Putative multidrug resistance protein MdtD">
    <location>
        <begin position="1"/>
        <end position="471"/>
    </location>
</feature>
<feature type="topological domain" description="Periplasmic" evidence="1">
    <location>
        <begin position="1"/>
        <end position="11"/>
    </location>
</feature>
<feature type="transmembrane region" description="Helical" evidence="1">
    <location>
        <begin position="12"/>
        <end position="32"/>
    </location>
</feature>
<feature type="topological domain" description="Cytoplasmic" evidence="1">
    <location>
        <begin position="33"/>
        <end position="48"/>
    </location>
</feature>
<feature type="transmembrane region" description="Helical" evidence="1">
    <location>
        <begin position="49"/>
        <end position="69"/>
    </location>
</feature>
<feature type="topological domain" description="Periplasmic" evidence="1">
    <location>
        <begin position="70"/>
        <end position="76"/>
    </location>
</feature>
<feature type="transmembrane region" description="Helical" evidence="1">
    <location>
        <begin position="77"/>
        <end position="97"/>
    </location>
</feature>
<feature type="topological domain" description="Cytoplasmic" evidence="1">
    <location>
        <begin position="98"/>
        <end position="101"/>
    </location>
</feature>
<feature type="transmembrane region" description="Helical" evidence="1">
    <location>
        <begin position="102"/>
        <end position="124"/>
    </location>
</feature>
<feature type="topological domain" description="Periplasmic" evidence="1">
    <location>
        <begin position="125"/>
        <end position="137"/>
    </location>
</feature>
<feature type="transmembrane region" description="Helical" evidence="1">
    <location>
        <begin position="138"/>
        <end position="158"/>
    </location>
</feature>
<feature type="topological domain" description="Cytoplasmic" evidence="1">
    <location>
        <begin position="159"/>
        <end position="164"/>
    </location>
</feature>
<feature type="transmembrane region" description="Helical" evidence="1">
    <location>
        <begin position="165"/>
        <end position="185"/>
    </location>
</feature>
<feature type="topological domain" description="Periplasmic" evidence="1">
    <location>
        <begin position="186"/>
        <end position="196"/>
    </location>
</feature>
<feature type="transmembrane region" description="Helical" evidence="1">
    <location>
        <begin position="197"/>
        <end position="217"/>
    </location>
</feature>
<feature type="topological domain" description="Cytoplasmic" evidence="1">
    <location>
        <begin position="218"/>
        <end position="224"/>
    </location>
</feature>
<feature type="transmembrane region" description="Helical" evidence="1">
    <location>
        <begin position="225"/>
        <end position="245"/>
    </location>
</feature>
<feature type="topological domain" description="Periplasmic" evidence="1">
    <location>
        <begin position="246"/>
        <end position="262"/>
    </location>
</feature>
<feature type="transmembrane region" description="Helical" evidence="1">
    <location>
        <begin position="263"/>
        <end position="283"/>
    </location>
</feature>
<feature type="topological domain" description="Cytoplasmic" evidence="1">
    <location>
        <begin position="284"/>
        <end position="285"/>
    </location>
</feature>
<feature type="transmembrane region" description="Helical" evidence="1">
    <location>
        <begin position="286"/>
        <end position="306"/>
    </location>
</feature>
<feature type="topological domain" description="Periplasmic" evidence="1">
    <location>
        <begin position="307"/>
        <end position="341"/>
    </location>
</feature>
<feature type="transmembrane region" description="Helical" evidence="1">
    <location>
        <begin position="342"/>
        <end position="362"/>
    </location>
</feature>
<feature type="topological domain" description="Cytoplasmic" evidence="1">
    <location>
        <begin position="363"/>
        <end position="395"/>
    </location>
</feature>
<feature type="transmembrane region" description="Helical" evidence="1">
    <location>
        <begin position="396"/>
        <end position="416"/>
    </location>
</feature>
<feature type="topological domain" description="Periplasmic" evidence="1">
    <location>
        <begin position="417"/>
        <end position="430"/>
    </location>
</feature>
<feature type="transmembrane region" description="Helical" evidence="1">
    <location>
        <begin position="431"/>
        <end position="451"/>
    </location>
</feature>
<feature type="topological domain" description="Cytoplasmic" evidence="1">
    <location>
        <begin position="452"/>
        <end position="471"/>
    </location>
</feature>